<dbReference type="EMBL" id="AF181116">
    <property type="protein sequence ID" value="AAF25816.1"/>
    <property type="molecule type" value="mRNA"/>
</dbReference>
<dbReference type="EMBL" id="AK002241">
    <property type="protein sequence ID" value="BAB21958.1"/>
    <property type="molecule type" value="mRNA"/>
</dbReference>
<dbReference type="EMBL" id="AK002266">
    <property type="protein sequence ID" value="BAB21976.1"/>
    <property type="molecule type" value="mRNA"/>
</dbReference>
<dbReference type="EMBL" id="AK004013">
    <property type="protein sequence ID" value="BAB23124.1"/>
    <property type="molecule type" value="mRNA"/>
</dbReference>
<dbReference type="EMBL" id="AK013391">
    <property type="protein sequence ID" value="BAB28826.1"/>
    <property type="molecule type" value="mRNA"/>
</dbReference>
<dbReference type="EMBL" id="AK014421">
    <property type="protein sequence ID" value="BAB29340.1"/>
    <property type="molecule type" value="mRNA"/>
</dbReference>
<dbReference type="EMBL" id="BC024365">
    <property type="protein sequence ID" value="AAH24365.1"/>
    <property type="molecule type" value="mRNA"/>
</dbReference>
<dbReference type="CCDS" id="CCDS49944.1"/>
<dbReference type="RefSeq" id="NP_061289.1">
    <property type="nucleotide sequence ID" value="NM_018819.5"/>
</dbReference>
<dbReference type="SMR" id="P63030"/>
<dbReference type="BioGRID" id="207746">
    <property type="interactions" value="4"/>
</dbReference>
<dbReference type="CORUM" id="P63030"/>
<dbReference type="FunCoup" id="P63030">
    <property type="interactions" value="2119"/>
</dbReference>
<dbReference type="STRING" id="10090.ENSMUSP00000119443"/>
<dbReference type="GuidetoPHARMACOLOGY" id="3022"/>
<dbReference type="GlyGen" id="P63030">
    <property type="glycosylation" value="1 site, 1 O-linked glycan (1 site)"/>
</dbReference>
<dbReference type="iPTMnet" id="P63030"/>
<dbReference type="PhosphoSitePlus" id="P63030"/>
<dbReference type="SwissPalm" id="P63030"/>
<dbReference type="jPOST" id="P63030"/>
<dbReference type="PaxDb" id="10090-ENSMUSP00000119443"/>
<dbReference type="PeptideAtlas" id="P63030"/>
<dbReference type="ProteomicsDB" id="291434"/>
<dbReference type="Pumba" id="P63030"/>
<dbReference type="Antibodypedia" id="49022">
    <property type="antibodies" value="143 antibodies from 25 providers"/>
</dbReference>
<dbReference type="DNASU" id="55951"/>
<dbReference type="Ensembl" id="ENSMUST00000155364.8">
    <property type="protein sequence ID" value="ENSMUSP00000119443.2"/>
    <property type="gene ID" value="ENSMUSG00000023861.19"/>
</dbReference>
<dbReference type="GeneID" id="55951"/>
<dbReference type="KEGG" id="mmu:55951"/>
<dbReference type="UCSC" id="uc033hao.1">
    <property type="organism name" value="mouse"/>
</dbReference>
<dbReference type="AGR" id="MGI:1915240"/>
<dbReference type="CTD" id="51660"/>
<dbReference type="MGI" id="MGI:1915240">
    <property type="gene designation" value="Mpc1"/>
</dbReference>
<dbReference type="VEuPathDB" id="HostDB:ENSMUSG00000023861"/>
<dbReference type="eggNOG" id="KOG1590">
    <property type="taxonomic scope" value="Eukaryota"/>
</dbReference>
<dbReference type="GeneTree" id="ENSGT00510000046988"/>
<dbReference type="InParanoid" id="P63030"/>
<dbReference type="OMA" id="CTTHFWG"/>
<dbReference type="PhylomeDB" id="P63030"/>
<dbReference type="TreeFam" id="TF314444"/>
<dbReference type="BioGRID-ORCS" id="55951">
    <property type="hits" value="3 hits in 75 CRISPR screens"/>
</dbReference>
<dbReference type="ChiTaRS" id="Mpc1">
    <property type="organism name" value="mouse"/>
</dbReference>
<dbReference type="PRO" id="PR:P63030"/>
<dbReference type="Proteomes" id="UP000000589">
    <property type="component" value="Chromosome 17"/>
</dbReference>
<dbReference type="RNAct" id="P63030">
    <property type="molecule type" value="protein"/>
</dbReference>
<dbReference type="Bgee" id="ENSMUSG00000023861">
    <property type="expression patterns" value="Expressed in proximal tubule and 98 other cell types or tissues"/>
</dbReference>
<dbReference type="ExpressionAtlas" id="P63030">
    <property type="expression patterns" value="baseline and differential"/>
</dbReference>
<dbReference type="GO" id="GO:0005743">
    <property type="term" value="C:mitochondrial inner membrane"/>
    <property type="evidence" value="ECO:0000314"/>
    <property type="project" value="MGI"/>
</dbReference>
<dbReference type="GO" id="GO:0005739">
    <property type="term" value="C:mitochondrion"/>
    <property type="evidence" value="ECO:0007005"/>
    <property type="project" value="MGI"/>
</dbReference>
<dbReference type="GO" id="GO:0050833">
    <property type="term" value="F:pyruvate transmembrane transporter activity"/>
    <property type="evidence" value="ECO:0000314"/>
    <property type="project" value="MGI"/>
</dbReference>
<dbReference type="GO" id="GO:1990830">
    <property type="term" value="P:cellular response to leukemia inhibitory factor"/>
    <property type="evidence" value="ECO:0000270"/>
    <property type="project" value="MGI"/>
</dbReference>
<dbReference type="GO" id="GO:0006850">
    <property type="term" value="P:mitochondrial pyruvate transmembrane transport"/>
    <property type="evidence" value="ECO:0000316"/>
    <property type="project" value="MGI"/>
</dbReference>
<dbReference type="GO" id="GO:0006086">
    <property type="term" value="P:pyruvate decarboxylation to acetyl-CoA"/>
    <property type="evidence" value="ECO:0000315"/>
    <property type="project" value="MGI"/>
</dbReference>
<dbReference type="InterPro" id="IPR005336">
    <property type="entry name" value="MPC"/>
</dbReference>
<dbReference type="PANTHER" id="PTHR14154">
    <property type="entry name" value="UPF0041 BRAIN PROTEIN 44-RELATED"/>
    <property type="match status" value="1"/>
</dbReference>
<dbReference type="Pfam" id="PF03650">
    <property type="entry name" value="MPC"/>
    <property type="match status" value="1"/>
</dbReference>
<gene>
    <name type="primary">Mpc1</name>
    <name type="synonym">Brp44l</name>
</gene>
<reference key="1">
    <citation type="journal article" date="2001" name="Mamm. Genome">
        <title>Synteny of orthologous genes conserved in mammals, snake, fly, nematode, and fission yeast.</title>
        <authorList>
            <person name="Trachtulec Z."/>
            <person name="Forejt J."/>
        </authorList>
    </citation>
    <scope>NUCLEOTIDE SEQUENCE [MRNA]</scope>
    <source>
        <tissue>Testis</tissue>
    </source>
</reference>
<reference key="2">
    <citation type="journal article" date="2005" name="Science">
        <title>The transcriptional landscape of the mammalian genome.</title>
        <authorList>
            <person name="Carninci P."/>
            <person name="Kasukawa T."/>
            <person name="Katayama S."/>
            <person name="Gough J."/>
            <person name="Frith M.C."/>
            <person name="Maeda N."/>
            <person name="Oyama R."/>
            <person name="Ravasi T."/>
            <person name="Lenhard B."/>
            <person name="Wells C."/>
            <person name="Kodzius R."/>
            <person name="Shimokawa K."/>
            <person name="Bajic V.B."/>
            <person name="Brenner S.E."/>
            <person name="Batalov S."/>
            <person name="Forrest A.R."/>
            <person name="Zavolan M."/>
            <person name="Davis M.J."/>
            <person name="Wilming L.G."/>
            <person name="Aidinis V."/>
            <person name="Allen J.E."/>
            <person name="Ambesi-Impiombato A."/>
            <person name="Apweiler R."/>
            <person name="Aturaliya R.N."/>
            <person name="Bailey T.L."/>
            <person name="Bansal M."/>
            <person name="Baxter L."/>
            <person name="Beisel K.W."/>
            <person name="Bersano T."/>
            <person name="Bono H."/>
            <person name="Chalk A.M."/>
            <person name="Chiu K.P."/>
            <person name="Choudhary V."/>
            <person name="Christoffels A."/>
            <person name="Clutterbuck D.R."/>
            <person name="Crowe M.L."/>
            <person name="Dalla E."/>
            <person name="Dalrymple B.P."/>
            <person name="de Bono B."/>
            <person name="Della Gatta G."/>
            <person name="di Bernardo D."/>
            <person name="Down T."/>
            <person name="Engstrom P."/>
            <person name="Fagiolini M."/>
            <person name="Faulkner G."/>
            <person name="Fletcher C.F."/>
            <person name="Fukushima T."/>
            <person name="Furuno M."/>
            <person name="Futaki S."/>
            <person name="Gariboldi M."/>
            <person name="Georgii-Hemming P."/>
            <person name="Gingeras T.R."/>
            <person name="Gojobori T."/>
            <person name="Green R.E."/>
            <person name="Gustincich S."/>
            <person name="Harbers M."/>
            <person name="Hayashi Y."/>
            <person name="Hensch T.K."/>
            <person name="Hirokawa N."/>
            <person name="Hill D."/>
            <person name="Huminiecki L."/>
            <person name="Iacono M."/>
            <person name="Ikeo K."/>
            <person name="Iwama A."/>
            <person name="Ishikawa T."/>
            <person name="Jakt M."/>
            <person name="Kanapin A."/>
            <person name="Katoh M."/>
            <person name="Kawasawa Y."/>
            <person name="Kelso J."/>
            <person name="Kitamura H."/>
            <person name="Kitano H."/>
            <person name="Kollias G."/>
            <person name="Krishnan S.P."/>
            <person name="Kruger A."/>
            <person name="Kummerfeld S.K."/>
            <person name="Kurochkin I.V."/>
            <person name="Lareau L.F."/>
            <person name="Lazarevic D."/>
            <person name="Lipovich L."/>
            <person name="Liu J."/>
            <person name="Liuni S."/>
            <person name="McWilliam S."/>
            <person name="Madan Babu M."/>
            <person name="Madera M."/>
            <person name="Marchionni L."/>
            <person name="Matsuda H."/>
            <person name="Matsuzawa S."/>
            <person name="Miki H."/>
            <person name="Mignone F."/>
            <person name="Miyake S."/>
            <person name="Morris K."/>
            <person name="Mottagui-Tabar S."/>
            <person name="Mulder N."/>
            <person name="Nakano N."/>
            <person name="Nakauchi H."/>
            <person name="Ng P."/>
            <person name="Nilsson R."/>
            <person name="Nishiguchi S."/>
            <person name="Nishikawa S."/>
            <person name="Nori F."/>
            <person name="Ohara O."/>
            <person name="Okazaki Y."/>
            <person name="Orlando V."/>
            <person name="Pang K.C."/>
            <person name="Pavan W.J."/>
            <person name="Pavesi G."/>
            <person name="Pesole G."/>
            <person name="Petrovsky N."/>
            <person name="Piazza S."/>
            <person name="Reed J."/>
            <person name="Reid J.F."/>
            <person name="Ring B.Z."/>
            <person name="Ringwald M."/>
            <person name="Rost B."/>
            <person name="Ruan Y."/>
            <person name="Salzberg S.L."/>
            <person name="Sandelin A."/>
            <person name="Schneider C."/>
            <person name="Schoenbach C."/>
            <person name="Sekiguchi K."/>
            <person name="Semple C.A."/>
            <person name="Seno S."/>
            <person name="Sessa L."/>
            <person name="Sheng Y."/>
            <person name="Shibata Y."/>
            <person name="Shimada H."/>
            <person name="Shimada K."/>
            <person name="Silva D."/>
            <person name="Sinclair B."/>
            <person name="Sperling S."/>
            <person name="Stupka E."/>
            <person name="Sugiura K."/>
            <person name="Sultana R."/>
            <person name="Takenaka Y."/>
            <person name="Taki K."/>
            <person name="Tammoja K."/>
            <person name="Tan S.L."/>
            <person name="Tang S."/>
            <person name="Taylor M.S."/>
            <person name="Tegner J."/>
            <person name="Teichmann S.A."/>
            <person name="Ueda H.R."/>
            <person name="van Nimwegen E."/>
            <person name="Verardo R."/>
            <person name="Wei C.L."/>
            <person name="Yagi K."/>
            <person name="Yamanishi H."/>
            <person name="Zabarovsky E."/>
            <person name="Zhu S."/>
            <person name="Zimmer A."/>
            <person name="Hide W."/>
            <person name="Bult C."/>
            <person name="Grimmond S.M."/>
            <person name="Teasdale R.D."/>
            <person name="Liu E.T."/>
            <person name="Brusic V."/>
            <person name="Quackenbush J."/>
            <person name="Wahlestedt C."/>
            <person name="Mattick J.S."/>
            <person name="Hume D.A."/>
            <person name="Kai C."/>
            <person name="Sasaki D."/>
            <person name="Tomaru Y."/>
            <person name="Fukuda S."/>
            <person name="Kanamori-Katayama M."/>
            <person name="Suzuki M."/>
            <person name="Aoki J."/>
            <person name="Arakawa T."/>
            <person name="Iida J."/>
            <person name="Imamura K."/>
            <person name="Itoh M."/>
            <person name="Kato T."/>
            <person name="Kawaji H."/>
            <person name="Kawagashira N."/>
            <person name="Kawashima T."/>
            <person name="Kojima M."/>
            <person name="Kondo S."/>
            <person name="Konno H."/>
            <person name="Nakano K."/>
            <person name="Ninomiya N."/>
            <person name="Nishio T."/>
            <person name="Okada M."/>
            <person name="Plessy C."/>
            <person name="Shibata K."/>
            <person name="Shiraki T."/>
            <person name="Suzuki S."/>
            <person name="Tagami M."/>
            <person name="Waki K."/>
            <person name="Watahiki A."/>
            <person name="Okamura-Oho Y."/>
            <person name="Suzuki H."/>
            <person name="Kawai J."/>
            <person name="Hayashizaki Y."/>
        </authorList>
    </citation>
    <scope>NUCLEOTIDE SEQUENCE [LARGE SCALE MRNA]</scope>
    <source>
        <strain>C57BL/6J</strain>
        <tissue>Embryo</tissue>
        <tissue>Kidney</tissue>
    </source>
</reference>
<reference key="3">
    <citation type="journal article" date="2004" name="Genome Res.">
        <title>The status, quality, and expansion of the NIH full-length cDNA project: the Mammalian Gene Collection (MGC).</title>
        <authorList>
            <consortium name="The MGC Project Team"/>
        </authorList>
    </citation>
    <scope>NUCLEOTIDE SEQUENCE [LARGE SCALE MRNA]</scope>
    <source>
        <strain>FVB/N</strain>
        <tissue>Colon</tissue>
    </source>
</reference>
<reference key="4">
    <citation type="submission" date="2007-04" db="UniProtKB">
        <authorList>
            <person name="Lubec G."/>
            <person name="Kang S.U."/>
        </authorList>
    </citation>
    <scope>PROTEIN SEQUENCE OF 47-54 AND 98-105</scope>
    <scope>IDENTIFICATION BY MASS SPECTROMETRY</scope>
    <source>
        <strain>C57BL/6J</strain>
        <tissue>Brain</tissue>
    </source>
</reference>
<reference key="5">
    <citation type="journal article" date="2010" name="Cell">
        <title>A tissue-specific atlas of mouse protein phosphorylation and expression.</title>
        <authorList>
            <person name="Huttlin E.L."/>
            <person name="Jedrychowski M.P."/>
            <person name="Elias J.E."/>
            <person name="Goswami T."/>
            <person name="Rad R."/>
            <person name="Beausoleil S.A."/>
            <person name="Villen J."/>
            <person name="Haas W."/>
            <person name="Sowa M.E."/>
            <person name="Gygi S.P."/>
        </authorList>
    </citation>
    <scope>IDENTIFICATION BY MASS SPECTROMETRY [LARGE SCALE ANALYSIS]</scope>
    <source>
        <tissue>Brain</tissue>
        <tissue>Brown adipose tissue</tissue>
        <tissue>Heart</tissue>
        <tissue>Kidney</tissue>
        <tissue>Liver</tissue>
        <tissue>Lung</tissue>
        <tissue>Pancreas</tissue>
        <tissue>Testis</tissue>
    </source>
</reference>
<reference key="6">
    <citation type="journal article" date="2012" name="Science">
        <title>Identification and functional expression of the mitochondrial pyruvate carrier.</title>
        <authorList>
            <person name="Herzig S."/>
            <person name="Raemy E."/>
            <person name="Montessuit S."/>
            <person name="Veuthey J.L."/>
            <person name="Zamboni N."/>
            <person name="Westermann B."/>
            <person name="Kunji E.R."/>
            <person name="Martinou J.C."/>
        </authorList>
    </citation>
    <scope>FUNCTION</scope>
    <scope>SUBCELLULAR LOCATION</scope>
    <scope>TRANSPORTER ACTIVITY</scope>
</reference>
<reference key="7">
    <citation type="journal article" date="2013" name="Proc. Natl. Acad. Sci. U.S.A.">
        <title>Label-free quantitative proteomics of the lysine acetylome in mitochondria identifies substrates of SIRT3 in metabolic pathways.</title>
        <authorList>
            <person name="Rardin M.J."/>
            <person name="Newman J.C."/>
            <person name="Held J.M."/>
            <person name="Cusack M.P."/>
            <person name="Sorensen D.J."/>
            <person name="Li B."/>
            <person name="Schilling B."/>
            <person name="Mooney S.D."/>
            <person name="Kahn C.R."/>
            <person name="Verdin E."/>
            <person name="Gibson B.W."/>
        </authorList>
    </citation>
    <scope>ACETYLATION [LARGE SCALE ANALYSIS] AT LYS-72</scope>
    <scope>IDENTIFICATION BY MASS SPECTROMETRY [LARGE SCALE ANALYSIS]</scope>
    <source>
        <tissue>Liver</tissue>
    </source>
</reference>
<sequence length="109" mass="12455">MAGALVRKAADYVRSKDFRDYLMSTHFWGPVANWGLPIAAINDMKKSPEIISGRMTFALCCYSLTFMRFAYKVQPRNWLLFACHVTNEVAQLIQGGRLINYEMSKRPSA</sequence>
<comment type="function">
    <text evidence="4">Mediates the uptake of pyruvate into mitochondria.</text>
</comment>
<comment type="catalytic activity">
    <reaction evidence="4">
        <text>pyruvate(out) + H(+)(out) = pyruvate(in) + H(+)(in)</text>
        <dbReference type="Rhea" id="RHEA:64720"/>
        <dbReference type="ChEBI" id="CHEBI:15361"/>
        <dbReference type="ChEBI" id="CHEBI:15378"/>
    </reaction>
</comment>
<comment type="subunit">
    <text evidence="2">Homodimer. Forms heterodimer with MPC2. The heterodimer is the more stable and dominant form.</text>
</comment>
<comment type="subcellular location">
    <subcellularLocation>
        <location evidence="4">Mitochondrion inner membrane</location>
        <topology evidence="3">Multi-pass membrane protein</topology>
    </subcellularLocation>
</comment>
<comment type="similarity">
    <text evidence="5">Belongs to the mitochondrial pyruvate carrier (MPC) (TC 2.A.105) family.</text>
</comment>
<feature type="initiator methionine" description="Removed" evidence="1">
    <location>
        <position position="1"/>
    </location>
</feature>
<feature type="chain" id="PRO_0000212798" description="Mitochondrial pyruvate carrier 1">
    <location>
        <begin position="2"/>
        <end position="109"/>
    </location>
</feature>
<feature type="topological domain" description="Mitochondrial matrix" evidence="2">
    <location>
        <begin position="2"/>
        <end position="20"/>
    </location>
</feature>
<feature type="transmembrane region" description="Helical" evidence="3">
    <location>
        <begin position="21"/>
        <end position="41"/>
    </location>
</feature>
<feature type="topological domain" description="Mitochondrial intermembrane" evidence="2">
    <location>
        <begin position="42"/>
        <end position="52"/>
    </location>
</feature>
<feature type="transmembrane region" description="Helical" evidence="3">
    <location>
        <begin position="53"/>
        <end position="71"/>
    </location>
</feature>
<feature type="topological domain" description="Mitochondrial matrix" evidence="2">
    <location>
        <begin position="72"/>
        <end position="109"/>
    </location>
</feature>
<feature type="modified residue" description="N-acetylalanine" evidence="1">
    <location>
        <position position="2"/>
    </location>
</feature>
<feature type="modified residue" description="N6-acetyllysine" evidence="6">
    <location>
        <position position="72"/>
    </location>
</feature>
<feature type="sequence conflict" description="In Ref. 2; BAB29340." evidence="5" ref="2">
    <original>L</original>
    <variation>Q</variation>
    <location>
        <position position="64"/>
    </location>
</feature>
<evidence type="ECO:0000250" key="1">
    <source>
        <dbReference type="UniProtKB" id="Q3ZCG2"/>
    </source>
</evidence>
<evidence type="ECO:0000250" key="2">
    <source>
        <dbReference type="UniProtKB" id="Q9Y5U8"/>
    </source>
</evidence>
<evidence type="ECO:0000255" key="3"/>
<evidence type="ECO:0000269" key="4">
    <source>
    </source>
</evidence>
<evidence type="ECO:0000305" key="5"/>
<evidence type="ECO:0007744" key="6">
    <source>
    </source>
</evidence>
<accession>P63030</accession>
<accession>Q9D6C0</accession>
<accession>Q9JLG5</accession>
<organism>
    <name type="scientific">Mus musculus</name>
    <name type="common">Mouse</name>
    <dbReference type="NCBI Taxonomy" id="10090"/>
    <lineage>
        <taxon>Eukaryota</taxon>
        <taxon>Metazoa</taxon>
        <taxon>Chordata</taxon>
        <taxon>Craniata</taxon>
        <taxon>Vertebrata</taxon>
        <taxon>Euteleostomi</taxon>
        <taxon>Mammalia</taxon>
        <taxon>Eutheria</taxon>
        <taxon>Euarchontoglires</taxon>
        <taxon>Glires</taxon>
        <taxon>Rodentia</taxon>
        <taxon>Myomorpha</taxon>
        <taxon>Muroidea</taxon>
        <taxon>Muridae</taxon>
        <taxon>Murinae</taxon>
        <taxon>Mus</taxon>
        <taxon>Mus</taxon>
    </lineage>
</organism>
<name>MPC1_MOUSE</name>
<keyword id="KW-0007">Acetylation</keyword>
<keyword id="KW-0903">Direct protein sequencing</keyword>
<keyword id="KW-0472">Membrane</keyword>
<keyword id="KW-0496">Mitochondrion</keyword>
<keyword id="KW-0999">Mitochondrion inner membrane</keyword>
<keyword id="KW-1185">Reference proteome</keyword>
<keyword id="KW-0812">Transmembrane</keyword>
<keyword id="KW-1133">Transmembrane helix</keyword>
<keyword id="KW-0813">Transport</keyword>
<protein>
    <recommendedName>
        <fullName>Mitochondrial pyruvate carrier 1</fullName>
    </recommendedName>
    <alternativeName>
        <fullName>Brain protein 44-like protein</fullName>
    </alternativeName>
</protein>
<proteinExistence type="evidence at protein level"/>